<gene>
    <name evidence="1" type="primary">tfe</name>
    <name type="ordered locus">LS215_1973</name>
</gene>
<keyword id="KW-0238">DNA-binding</keyword>
<keyword id="KW-0804">Transcription</keyword>
<keyword id="KW-0805">Transcription regulation</keyword>
<feature type="chain" id="PRO_1000216182" description="Transcription factor E">
    <location>
        <begin position="1"/>
        <end position="178"/>
    </location>
</feature>
<feature type="domain" description="HTH TFE/IIEalpha-type" evidence="1">
    <location>
        <begin position="4"/>
        <end position="88"/>
    </location>
</feature>
<reference key="1">
    <citation type="journal article" date="2009" name="Proc. Natl. Acad. Sci. U.S.A.">
        <title>Biogeography of the Sulfolobus islandicus pan-genome.</title>
        <authorList>
            <person name="Reno M.L."/>
            <person name="Held N.L."/>
            <person name="Fields C.J."/>
            <person name="Burke P.V."/>
            <person name="Whitaker R.J."/>
        </authorList>
    </citation>
    <scope>NUCLEOTIDE SEQUENCE [LARGE SCALE GENOMIC DNA]</scope>
    <source>
        <strain>L.S.2.15 / Lassen #1</strain>
    </source>
</reference>
<accession>C3MRF5</accession>
<name>TFE_SACI2</name>
<organism>
    <name type="scientific">Saccharolobus islandicus (strain L.S.2.15 / Lassen #1)</name>
    <name type="common">Sulfolobus islandicus</name>
    <dbReference type="NCBI Taxonomy" id="429572"/>
    <lineage>
        <taxon>Archaea</taxon>
        <taxon>Thermoproteota</taxon>
        <taxon>Thermoprotei</taxon>
        <taxon>Sulfolobales</taxon>
        <taxon>Sulfolobaceae</taxon>
        <taxon>Saccharolobus</taxon>
    </lineage>
</organism>
<evidence type="ECO:0000255" key="1">
    <source>
        <dbReference type="HAMAP-Rule" id="MF_01909"/>
    </source>
</evidence>
<proteinExistence type="inferred from homology"/>
<sequence>MVNAEDLFINLAKSLLGDDVIDVLRVLLEKGTEMTDEEIANQLNIKVNDVRKKLNLLEEQGFVSYRKTRDKDSGWFIYYWKPNIDQINEILLNRKRLILDKLKSRLEYEKNNTFFICPQDNSRYSFEEAFENEFKCLKCGSQLTYYDTEKIKSFLEQKIRQIEEEIDKETKLGANKSH</sequence>
<comment type="function">
    <text evidence="1">Transcription factor that plays a role in the activation of archaeal genes transcribed by RNA polymerase. Facilitates transcription initiation by enhancing TATA-box recognition by TATA-box-binding protein (Tbp), and transcription factor B (Tfb) and RNA polymerase recruitment. Not absolutely required for transcription in vitro, but particularly important in cases where Tbp or Tfb function is not optimal. It dynamically alters the nucleic acid-binding properties of RNA polymerases by stabilizing the initiation complex and destabilizing elongation complexes. Seems to translocate with the RNA polymerase following initiation and acts by binding to the non template strand of the transcription bubble in elongation complexes.</text>
</comment>
<comment type="subunit">
    <text evidence="1">Monomer. Interaction with RNA polymerase subunits RpoF and RpoE is necessary for Tfe stimulatory transcription activity. Able to interact with Tbp and RNA polymerase in the absence of DNA promoter. Interacts both with the preinitiation and elongation complexes.</text>
</comment>
<comment type="domain">
    <text evidence="1">The winged helix domain is involved in binding to DNA in the preinitiation complex.</text>
</comment>
<comment type="similarity">
    <text evidence="1">Belongs to the TFE family.</text>
</comment>
<dbReference type="EMBL" id="CP001399">
    <property type="protein sequence ID" value="ACP35968.1"/>
    <property type="molecule type" value="Genomic_DNA"/>
</dbReference>
<dbReference type="RefSeq" id="WP_012711838.1">
    <property type="nucleotide sequence ID" value="NC_012589.1"/>
</dbReference>
<dbReference type="SMR" id="C3MRF5"/>
<dbReference type="GeneID" id="84062185"/>
<dbReference type="KEGG" id="sis:LS215_1973"/>
<dbReference type="HOGENOM" id="CLU_100097_0_0_2"/>
<dbReference type="OrthoDB" id="5935at2157"/>
<dbReference type="Proteomes" id="UP000001747">
    <property type="component" value="Chromosome"/>
</dbReference>
<dbReference type="GO" id="GO:0003677">
    <property type="term" value="F:DNA binding"/>
    <property type="evidence" value="ECO:0007669"/>
    <property type="project" value="UniProtKB-KW"/>
</dbReference>
<dbReference type="GO" id="GO:0006355">
    <property type="term" value="P:regulation of DNA-templated transcription"/>
    <property type="evidence" value="ECO:0007669"/>
    <property type="project" value="InterPro"/>
</dbReference>
<dbReference type="GO" id="GO:0006367">
    <property type="term" value="P:transcription initiation at RNA polymerase II promoter"/>
    <property type="evidence" value="ECO:0007669"/>
    <property type="project" value="InterPro"/>
</dbReference>
<dbReference type="Gene3D" id="1.10.10.10">
    <property type="entry name" value="Winged helix-like DNA-binding domain superfamily/Winged helix DNA-binding domain"/>
    <property type="match status" value="1"/>
</dbReference>
<dbReference type="HAMAP" id="MF_01909">
    <property type="entry name" value="TFE_arch"/>
    <property type="match status" value="1"/>
</dbReference>
<dbReference type="InterPro" id="IPR016481">
    <property type="entry name" value="TF_E_archaea"/>
</dbReference>
<dbReference type="InterPro" id="IPR039997">
    <property type="entry name" value="TFE"/>
</dbReference>
<dbReference type="InterPro" id="IPR017919">
    <property type="entry name" value="TFIIE/TFIIEa_HTH"/>
</dbReference>
<dbReference type="InterPro" id="IPR002853">
    <property type="entry name" value="TFIIE_asu"/>
</dbReference>
<dbReference type="InterPro" id="IPR024550">
    <property type="entry name" value="TFIIEa/SarR/Rpc3_HTH_dom"/>
</dbReference>
<dbReference type="InterPro" id="IPR036388">
    <property type="entry name" value="WH-like_DNA-bd_sf"/>
</dbReference>
<dbReference type="InterPro" id="IPR036390">
    <property type="entry name" value="WH_DNA-bd_sf"/>
</dbReference>
<dbReference type="PANTHER" id="PTHR13097:SF7">
    <property type="entry name" value="GENERAL TRANSCRIPTION FACTOR IIE SUBUNIT 1"/>
    <property type="match status" value="1"/>
</dbReference>
<dbReference type="PANTHER" id="PTHR13097">
    <property type="entry name" value="TRANSCRIPTION INITIATION FACTOR IIE, ALPHA SUBUNIT"/>
    <property type="match status" value="1"/>
</dbReference>
<dbReference type="Pfam" id="PF02002">
    <property type="entry name" value="TFIIE_alpha"/>
    <property type="match status" value="1"/>
</dbReference>
<dbReference type="PIRSF" id="PIRSF006373">
    <property type="entry name" value="TF_E_archaea"/>
    <property type="match status" value="1"/>
</dbReference>
<dbReference type="SMART" id="SM00531">
    <property type="entry name" value="TFIIE"/>
    <property type="match status" value="1"/>
</dbReference>
<dbReference type="SUPFAM" id="SSF46785">
    <property type="entry name" value="Winged helix' DNA-binding domain"/>
    <property type="match status" value="1"/>
</dbReference>
<dbReference type="PROSITE" id="PS51344">
    <property type="entry name" value="HTH_TFE_IIE"/>
    <property type="match status" value="1"/>
</dbReference>
<protein>
    <recommendedName>
        <fullName evidence="1">Transcription factor E</fullName>
        <shortName evidence="1">TFE</shortName>
    </recommendedName>
    <alternativeName>
        <fullName evidence="1">TFIIE subunit alpha homolog</fullName>
    </alternativeName>
    <alternativeName>
        <fullName evidence="1">Transcription initiation factor TFIIE</fullName>
    </alternativeName>
</protein>